<keyword id="KW-1003">Cell membrane</keyword>
<keyword id="KW-0204">Cytolysis</keyword>
<keyword id="KW-0472">Membrane</keyword>
<keyword id="KW-1185">Reference proteome</keyword>
<keyword id="KW-0812">Transmembrane</keyword>
<keyword id="KW-1133">Transmembrane helix</keyword>
<gene>
    <name evidence="1" type="primary">cidA</name>
    <name type="synonym">ywbH</name>
    <name type="ordered locus">BSU38320</name>
    <name type="ORF">ipa-23r</name>
</gene>
<proteinExistence type="inferred from homology"/>
<protein>
    <recommendedName>
        <fullName evidence="1">Holin-like protein CidA</fullName>
    </recommendedName>
</protein>
<reference key="1">
    <citation type="journal article" date="1993" name="Mol. Microbiol.">
        <title>Bacillus subtilis genome project: cloning and sequencing of the 97 kb region from 325 degrees to 333 degrees.</title>
        <authorList>
            <person name="Glaser P."/>
            <person name="Kunst F."/>
            <person name="Arnaud M."/>
            <person name="Coudart M.P."/>
            <person name="Gonzales W."/>
            <person name="Hullo M.-F."/>
            <person name="Ionescu M."/>
            <person name="Lubochinsky B."/>
            <person name="Marcelino L."/>
            <person name="Moszer I."/>
            <person name="Presecan E."/>
            <person name="Santana M."/>
            <person name="Schneider E."/>
            <person name="Schweizer J."/>
            <person name="Vertes A."/>
            <person name="Rapoport G."/>
            <person name="Danchin A."/>
        </authorList>
    </citation>
    <scope>NUCLEOTIDE SEQUENCE [GENOMIC DNA]</scope>
    <source>
        <strain>168</strain>
    </source>
</reference>
<reference key="2">
    <citation type="journal article" date="1997" name="Nature">
        <title>The complete genome sequence of the Gram-positive bacterium Bacillus subtilis.</title>
        <authorList>
            <person name="Kunst F."/>
            <person name="Ogasawara N."/>
            <person name="Moszer I."/>
            <person name="Albertini A.M."/>
            <person name="Alloni G."/>
            <person name="Azevedo V."/>
            <person name="Bertero M.G."/>
            <person name="Bessieres P."/>
            <person name="Bolotin A."/>
            <person name="Borchert S."/>
            <person name="Borriss R."/>
            <person name="Boursier L."/>
            <person name="Brans A."/>
            <person name="Braun M."/>
            <person name="Brignell S.C."/>
            <person name="Bron S."/>
            <person name="Brouillet S."/>
            <person name="Bruschi C.V."/>
            <person name="Caldwell B."/>
            <person name="Capuano V."/>
            <person name="Carter N.M."/>
            <person name="Choi S.-K."/>
            <person name="Codani J.-J."/>
            <person name="Connerton I.F."/>
            <person name="Cummings N.J."/>
            <person name="Daniel R.A."/>
            <person name="Denizot F."/>
            <person name="Devine K.M."/>
            <person name="Duesterhoeft A."/>
            <person name="Ehrlich S.D."/>
            <person name="Emmerson P.T."/>
            <person name="Entian K.-D."/>
            <person name="Errington J."/>
            <person name="Fabret C."/>
            <person name="Ferrari E."/>
            <person name="Foulger D."/>
            <person name="Fritz C."/>
            <person name="Fujita M."/>
            <person name="Fujita Y."/>
            <person name="Fuma S."/>
            <person name="Galizzi A."/>
            <person name="Galleron N."/>
            <person name="Ghim S.-Y."/>
            <person name="Glaser P."/>
            <person name="Goffeau A."/>
            <person name="Golightly E.J."/>
            <person name="Grandi G."/>
            <person name="Guiseppi G."/>
            <person name="Guy B.J."/>
            <person name="Haga K."/>
            <person name="Haiech J."/>
            <person name="Harwood C.R."/>
            <person name="Henaut A."/>
            <person name="Hilbert H."/>
            <person name="Holsappel S."/>
            <person name="Hosono S."/>
            <person name="Hullo M.-F."/>
            <person name="Itaya M."/>
            <person name="Jones L.-M."/>
            <person name="Joris B."/>
            <person name="Karamata D."/>
            <person name="Kasahara Y."/>
            <person name="Klaerr-Blanchard M."/>
            <person name="Klein C."/>
            <person name="Kobayashi Y."/>
            <person name="Koetter P."/>
            <person name="Koningstein G."/>
            <person name="Krogh S."/>
            <person name="Kumano M."/>
            <person name="Kurita K."/>
            <person name="Lapidus A."/>
            <person name="Lardinois S."/>
            <person name="Lauber J."/>
            <person name="Lazarevic V."/>
            <person name="Lee S.-M."/>
            <person name="Levine A."/>
            <person name="Liu H."/>
            <person name="Masuda S."/>
            <person name="Mauel C."/>
            <person name="Medigue C."/>
            <person name="Medina N."/>
            <person name="Mellado R.P."/>
            <person name="Mizuno M."/>
            <person name="Moestl D."/>
            <person name="Nakai S."/>
            <person name="Noback M."/>
            <person name="Noone D."/>
            <person name="O'Reilly M."/>
            <person name="Ogawa K."/>
            <person name="Ogiwara A."/>
            <person name="Oudega B."/>
            <person name="Park S.-H."/>
            <person name="Parro V."/>
            <person name="Pohl T.M."/>
            <person name="Portetelle D."/>
            <person name="Porwollik S."/>
            <person name="Prescott A.M."/>
            <person name="Presecan E."/>
            <person name="Pujic P."/>
            <person name="Purnelle B."/>
            <person name="Rapoport G."/>
            <person name="Rey M."/>
            <person name="Reynolds S."/>
            <person name="Rieger M."/>
            <person name="Rivolta C."/>
            <person name="Rocha E."/>
            <person name="Roche B."/>
            <person name="Rose M."/>
            <person name="Sadaie Y."/>
            <person name="Sato T."/>
            <person name="Scanlan E."/>
            <person name="Schleich S."/>
            <person name="Schroeter R."/>
            <person name="Scoffone F."/>
            <person name="Sekiguchi J."/>
            <person name="Sekowska A."/>
            <person name="Seror S.J."/>
            <person name="Serror P."/>
            <person name="Shin B.-S."/>
            <person name="Soldo B."/>
            <person name="Sorokin A."/>
            <person name="Tacconi E."/>
            <person name="Takagi T."/>
            <person name="Takahashi H."/>
            <person name="Takemaru K."/>
            <person name="Takeuchi M."/>
            <person name="Tamakoshi A."/>
            <person name="Tanaka T."/>
            <person name="Terpstra P."/>
            <person name="Tognoni A."/>
            <person name="Tosato V."/>
            <person name="Uchiyama S."/>
            <person name="Vandenbol M."/>
            <person name="Vannier F."/>
            <person name="Vassarotti A."/>
            <person name="Viari A."/>
            <person name="Wambutt R."/>
            <person name="Wedler E."/>
            <person name="Wedler H."/>
            <person name="Weitzenegger T."/>
            <person name="Winters P."/>
            <person name="Wipat A."/>
            <person name="Yamamoto H."/>
            <person name="Yamane K."/>
            <person name="Yasumoto K."/>
            <person name="Yata K."/>
            <person name="Yoshida K."/>
            <person name="Yoshikawa H.-F."/>
            <person name="Zumstein E."/>
            <person name="Yoshikawa H."/>
            <person name="Danchin A."/>
        </authorList>
    </citation>
    <scope>NUCLEOTIDE SEQUENCE [LARGE SCALE GENOMIC DNA]</scope>
    <source>
        <strain>168</strain>
    </source>
</reference>
<dbReference type="EMBL" id="X73124">
    <property type="protein sequence ID" value="CAA51579.1"/>
    <property type="molecule type" value="Genomic_DNA"/>
</dbReference>
<dbReference type="EMBL" id="AL009126">
    <property type="protein sequence ID" value="CAB15858.1"/>
    <property type="molecule type" value="Genomic_DNA"/>
</dbReference>
<dbReference type="PIR" id="S39678">
    <property type="entry name" value="S39678"/>
</dbReference>
<dbReference type="RefSeq" id="NP_391711.1">
    <property type="nucleotide sequence ID" value="NC_000964.3"/>
</dbReference>
<dbReference type="RefSeq" id="WP_003227375.1">
    <property type="nucleotide sequence ID" value="NZ_OZ025638.1"/>
</dbReference>
<dbReference type="SMR" id="P39591"/>
<dbReference type="FunCoup" id="P39591">
    <property type="interactions" value="129"/>
</dbReference>
<dbReference type="STRING" id="224308.BSU38320"/>
<dbReference type="TCDB" id="1.E.14.1.16">
    <property type="family name" value="the cida/lrga holin (cida/lrga holin) family"/>
</dbReference>
<dbReference type="PaxDb" id="224308-BSU38320"/>
<dbReference type="EnsemblBacteria" id="CAB15858">
    <property type="protein sequence ID" value="CAB15858"/>
    <property type="gene ID" value="BSU_38320"/>
</dbReference>
<dbReference type="GeneID" id="937321"/>
<dbReference type="KEGG" id="bsu:BSU38320"/>
<dbReference type="PATRIC" id="fig|224308.179.peg.4148"/>
<dbReference type="eggNOG" id="COG1380">
    <property type="taxonomic scope" value="Bacteria"/>
</dbReference>
<dbReference type="InParanoid" id="P39591"/>
<dbReference type="OrthoDB" id="3176438at2"/>
<dbReference type="BioCyc" id="BSUB:BSU38320-MONOMER"/>
<dbReference type="Proteomes" id="UP000001570">
    <property type="component" value="Chromosome"/>
</dbReference>
<dbReference type="GO" id="GO:0005886">
    <property type="term" value="C:plasma membrane"/>
    <property type="evidence" value="ECO:0007669"/>
    <property type="project" value="UniProtKB-SubCell"/>
</dbReference>
<dbReference type="GO" id="GO:0019835">
    <property type="term" value="P:cytolysis"/>
    <property type="evidence" value="ECO:0007669"/>
    <property type="project" value="UniProtKB-UniRule"/>
</dbReference>
<dbReference type="GO" id="GO:0031640">
    <property type="term" value="P:killing of cells of another organism"/>
    <property type="evidence" value="ECO:0007669"/>
    <property type="project" value="UniProtKB-KW"/>
</dbReference>
<dbReference type="GO" id="GO:0012501">
    <property type="term" value="P:programmed cell death"/>
    <property type="evidence" value="ECO:0007669"/>
    <property type="project" value="UniProtKB-UniRule"/>
</dbReference>
<dbReference type="HAMAP" id="MF_01143">
    <property type="entry name" value="CidA"/>
    <property type="match status" value="1"/>
</dbReference>
<dbReference type="InterPro" id="IPR023760">
    <property type="entry name" value="Holin-like_CidA"/>
</dbReference>
<dbReference type="InterPro" id="IPR005538">
    <property type="entry name" value="LrgA/CidA"/>
</dbReference>
<dbReference type="NCBIfam" id="NF002460">
    <property type="entry name" value="PRK01658.1"/>
    <property type="match status" value="1"/>
</dbReference>
<dbReference type="PANTHER" id="PTHR33931:SF2">
    <property type="entry name" value="HOLIN-LIKE PROTEIN CIDA"/>
    <property type="match status" value="1"/>
</dbReference>
<dbReference type="PANTHER" id="PTHR33931">
    <property type="entry name" value="HOLIN-LIKE PROTEIN CIDA-RELATED"/>
    <property type="match status" value="1"/>
</dbReference>
<dbReference type="Pfam" id="PF03788">
    <property type="entry name" value="LrgA"/>
    <property type="match status" value="1"/>
</dbReference>
<organism>
    <name type="scientific">Bacillus subtilis (strain 168)</name>
    <dbReference type="NCBI Taxonomy" id="224308"/>
    <lineage>
        <taxon>Bacteria</taxon>
        <taxon>Bacillati</taxon>
        <taxon>Bacillota</taxon>
        <taxon>Bacilli</taxon>
        <taxon>Bacillales</taxon>
        <taxon>Bacillaceae</taxon>
        <taxon>Bacillus</taxon>
    </lineage>
</organism>
<accession>P39591</accession>
<feature type="chain" id="PRO_0000213177" description="Holin-like protein CidA">
    <location>
        <begin position="1"/>
        <end position="128"/>
    </location>
</feature>
<feature type="transmembrane region" description="Helical" evidence="1">
    <location>
        <begin position="4"/>
        <end position="24"/>
    </location>
</feature>
<feature type="transmembrane region" description="Helical" evidence="1">
    <location>
        <begin position="26"/>
        <end position="46"/>
    </location>
</feature>
<feature type="transmembrane region" description="Helical" evidence="1">
    <location>
        <begin position="59"/>
        <end position="79"/>
    </location>
</feature>
<feature type="transmembrane region" description="Helical" evidence="1">
    <location>
        <begin position="88"/>
        <end position="108"/>
    </location>
</feature>
<name>CIDA_BACSU</name>
<sequence length="128" mass="14261">MKKLLLTVIQIALLFIFARLINWVTALLHINIPGSIIGIVILFTLLHFNIIKLEWIELGAAWLLGELLLFFIPSAVGVIEYGDIMSKFGVSILLVVIISTFVVMVSTGTLTQLIAKRKEKKHTCSSEL</sequence>
<evidence type="ECO:0000255" key="1">
    <source>
        <dbReference type="HAMAP-Rule" id="MF_01143"/>
    </source>
</evidence>
<comment type="function">
    <text evidence="1">Increases the activity of extracellular murein hydrolases possibly by mediating their export via hole formation. Inhibited by the antiholin-like proteins LrgAB. In an unstressed cell, the LrgAB products probably inhibit the function of the CidA protein. When a cell is stressed by the addition of antibiotics or by other factors in the environment, CidA possibly oligomerizes within the bacterial cell membrane, creating lesions that disrupt the proton motive force, which in turn results in loss of cell viability. These lesions are also hypothesized to regulate the subsequent cell lysis by either allowing the murein hydrolases access to the cell wall substrate and/or regulating their activity by a possible change in the cell wall pH that results from loss of membrane potential.</text>
</comment>
<comment type="subcellular location">
    <subcellularLocation>
        <location evidence="1">Cell membrane</location>
        <topology evidence="1">Multi-pass membrane protein</topology>
    </subcellularLocation>
</comment>
<comment type="similarity">
    <text evidence="1">Belongs to the CidA/LrgA family. CidA subfamily.</text>
</comment>